<sequence length="136" mass="13713">MQFSTVASIAAIAAVASAASNITTATVTEESTTLVTITSCEDHVCSETVSPALVSTATVTVNDVITQYTTWCPLPTTEAPKNTTSPAPTEKPTEKPTEKPTQQGSSTQTVTSYTGAAVKALPAAGALLAGAAALLL</sequence>
<keyword id="KW-0134">Cell wall</keyword>
<keyword id="KW-0325">Glycoprotein</keyword>
<keyword id="KW-0336">GPI-anchor</keyword>
<keyword id="KW-0449">Lipoprotein</keyword>
<keyword id="KW-0472">Membrane</keyword>
<keyword id="KW-0964">Secreted</keyword>
<keyword id="KW-0732">Signal</keyword>
<organism>
    <name type="scientific">Saccharomyces cerevisiae (strain ATCC 204508 / S288c)</name>
    <name type="common">Baker's yeast</name>
    <dbReference type="NCBI Taxonomy" id="559292"/>
    <lineage>
        <taxon>Eukaryota</taxon>
        <taxon>Fungi</taxon>
        <taxon>Dikarya</taxon>
        <taxon>Ascomycota</taxon>
        <taxon>Saccharomycotina</taxon>
        <taxon>Saccharomycetes</taxon>
        <taxon>Saccharomycetales</taxon>
        <taxon>Saccharomycetaceae</taxon>
        <taxon>Saccharomyces</taxon>
    </lineage>
</organism>
<proteinExistence type="uncertain"/>
<reference key="1">
    <citation type="journal article" date="1997" name="Nature">
        <title>The nucleotide sequence of Saccharomyces cerevisiae chromosome IV.</title>
        <authorList>
            <person name="Jacq C."/>
            <person name="Alt-Moerbe J."/>
            <person name="Andre B."/>
            <person name="Arnold W."/>
            <person name="Bahr A."/>
            <person name="Ballesta J.P.G."/>
            <person name="Bargues M."/>
            <person name="Baron L."/>
            <person name="Becker A."/>
            <person name="Biteau N."/>
            <person name="Bloecker H."/>
            <person name="Blugeon C."/>
            <person name="Boskovic J."/>
            <person name="Brandt P."/>
            <person name="Brueckner M."/>
            <person name="Buitrago M.J."/>
            <person name="Coster F."/>
            <person name="Delaveau T."/>
            <person name="del Rey F."/>
            <person name="Dujon B."/>
            <person name="Eide L.G."/>
            <person name="Garcia-Cantalejo J.M."/>
            <person name="Goffeau A."/>
            <person name="Gomez-Peris A."/>
            <person name="Granotier C."/>
            <person name="Hanemann V."/>
            <person name="Hankeln T."/>
            <person name="Hoheisel J.D."/>
            <person name="Jaeger W."/>
            <person name="Jimenez A."/>
            <person name="Jonniaux J.-L."/>
            <person name="Kraemer C."/>
            <person name="Kuester H."/>
            <person name="Laamanen P."/>
            <person name="Legros Y."/>
            <person name="Louis E.J."/>
            <person name="Moeller-Rieker S."/>
            <person name="Monnet A."/>
            <person name="Moro M."/>
            <person name="Mueller-Auer S."/>
            <person name="Nussbaumer B."/>
            <person name="Paricio N."/>
            <person name="Paulin L."/>
            <person name="Perea J."/>
            <person name="Perez-Alonso M."/>
            <person name="Perez-Ortin J.E."/>
            <person name="Pohl T.M."/>
            <person name="Prydz H."/>
            <person name="Purnelle B."/>
            <person name="Rasmussen S.W."/>
            <person name="Remacha M.A."/>
            <person name="Revuelta J.L."/>
            <person name="Rieger M."/>
            <person name="Salom D."/>
            <person name="Saluz H.P."/>
            <person name="Saiz J.E."/>
            <person name="Saren A.-M."/>
            <person name="Schaefer M."/>
            <person name="Scharfe M."/>
            <person name="Schmidt E.R."/>
            <person name="Schneider C."/>
            <person name="Scholler P."/>
            <person name="Schwarz S."/>
            <person name="Soler-Mira A."/>
            <person name="Urrestarazu L.A."/>
            <person name="Verhasselt P."/>
            <person name="Vissers S."/>
            <person name="Voet M."/>
            <person name="Volckaert G."/>
            <person name="Wagner G."/>
            <person name="Wambutt R."/>
            <person name="Wedler E."/>
            <person name="Wedler H."/>
            <person name="Woelfl S."/>
            <person name="Harris D.E."/>
            <person name="Bowman S."/>
            <person name="Brown D."/>
            <person name="Churcher C.M."/>
            <person name="Connor R."/>
            <person name="Dedman K."/>
            <person name="Gentles S."/>
            <person name="Hamlin N."/>
            <person name="Hunt S."/>
            <person name="Jones L."/>
            <person name="McDonald S."/>
            <person name="Murphy L.D."/>
            <person name="Niblett D."/>
            <person name="Odell C."/>
            <person name="Oliver K."/>
            <person name="Rajandream M.A."/>
            <person name="Richards C."/>
            <person name="Shore L."/>
            <person name="Walsh S.V."/>
            <person name="Barrell B.G."/>
            <person name="Dietrich F.S."/>
            <person name="Mulligan J.T."/>
            <person name="Allen E."/>
            <person name="Araujo R."/>
            <person name="Aviles E."/>
            <person name="Berno A."/>
            <person name="Carpenter J."/>
            <person name="Chen E."/>
            <person name="Cherry J.M."/>
            <person name="Chung E."/>
            <person name="Duncan M."/>
            <person name="Hunicke-Smith S."/>
            <person name="Hyman R.W."/>
            <person name="Komp C."/>
            <person name="Lashkari D."/>
            <person name="Lew H."/>
            <person name="Lin D."/>
            <person name="Mosedale D."/>
            <person name="Nakahara K."/>
            <person name="Namath A."/>
            <person name="Oefner P."/>
            <person name="Oh C."/>
            <person name="Petel F.X."/>
            <person name="Roberts D."/>
            <person name="Schramm S."/>
            <person name="Schroeder M."/>
            <person name="Shogren T."/>
            <person name="Shroff N."/>
            <person name="Winant A."/>
            <person name="Yelton M.A."/>
            <person name="Botstein D."/>
            <person name="Davis R.W."/>
            <person name="Johnston M."/>
            <person name="Andrews S."/>
            <person name="Brinkman R."/>
            <person name="Cooper J."/>
            <person name="Ding H."/>
            <person name="Du Z."/>
            <person name="Favello A."/>
            <person name="Fulton L."/>
            <person name="Gattung S."/>
            <person name="Greco T."/>
            <person name="Hallsworth K."/>
            <person name="Hawkins J."/>
            <person name="Hillier L.W."/>
            <person name="Jier M."/>
            <person name="Johnson D."/>
            <person name="Johnston L."/>
            <person name="Kirsten J."/>
            <person name="Kucaba T."/>
            <person name="Langston Y."/>
            <person name="Latreille P."/>
            <person name="Le T."/>
            <person name="Mardis E."/>
            <person name="Menezes S."/>
            <person name="Miller N."/>
            <person name="Nhan M."/>
            <person name="Pauley A."/>
            <person name="Peluso D."/>
            <person name="Rifkin L."/>
            <person name="Riles L."/>
            <person name="Taich A."/>
            <person name="Trevaskis E."/>
            <person name="Vignati D."/>
            <person name="Wilcox L."/>
            <person name="Wohldman P."/>
            <person name="Vaudin M."/>
            <person name="Wilson R."/>
            <person name="Waterston R."/>
            <person name="Albermann K."/>
            <person name="Hani J."/>
            <person name="Heumann K."/>
            <person name="Kleine K."/>
            <person name="Mewes H.-W."/>
            <person name="Zollner A."/>
            <person name="Zaccaria P."/>
        </authorList>
    </citation>
    <scope>NUCLEOTIDE SEQUENCE [LARGE SCALE GENOMIC DNA]</scope>
    <source>
        <strain>ATCC 204508 / S288c</strain>
    </source>
</reference>
<reference key="2">
    <citation type="journal article" date="2014" name="G3 (Bethesda)">
        <title>The reference genome sequence of Saccharomyces cerevisiae: Then and now.</title>
        <authorList>
            <person name="Engel S.R."/>
            <person name="Dietrich F.S."/>
            <person name="Fisk D.G."/>
            <person name="Binkley G."/>
            <person name="Balakrishnan R."/>
            <person name="Costanzo M.C."/>
            <person name="Dwight S.S."/>
            <person name="Hitz B.C."/>
            <person name="Karra K."/>
            <person name="Nash R.S."/>
            <person name="Weng S."/>
            <person name="Wong E.D."/>
            <person name="Lloyd P."/>
            <person name="Skrzypek M.S."/>
            <person name="Miyasato S.R."/>
            <person name="Simison M."/>
            <person name="Cherry J.M."/>
        </authorList>
    </citation>
    <scope>GENOME REANNOTATION</scope>
    <source>
        <strain>ATCC 204508 / S288c</strain>
    </source>
</reference>
<reference key="3">
    <citation type="journal article" date="1998" name="Mol. Gen. Genet.">
        <title>Screening for glycosylphosphatidylinositol (GPI)-dependent cell wall proteins in Saccharomyces cerevisiae.</title>
        <authorList>
            <person name="Hamada K."/>
            <person name="Fukuchi S."/>
            <person name="Arisawa M."/>
            <person name="Baba M."/>
            <person name="Kitada K."/>
        </authorList>
    </citation>
    <scope>SUBCELLULAR LOCATION</scope>
</reference>
<accession>Q7LHD1</accession>
<feature type="signal peptide" evidence="2">
    <location>
        <begin position="1"/>
        <end position="18"/>
    </location>
</feature>
<feature type="chain" id="PRO_0000226148" description="Putative covalently bound cell wall protein 22">
    <location>
        <begin position="19"/>
        <end position="115"/>
    </location>
</feature>
<feature type="propeptide" id="PRO_0000226149" description="Removed in mature form" evidence="2">
    <location>
        <begin position="116"/>
        <end position="136"/>
    </location>
</feature>
<feature type="region of interest" description="Disordered" evidence="3">
    <location>
        <begin position="73"/>
        <end position="110"/>
    </location>
</feature>
<feature type="compositionally biased region" description="Low complexity" evidence="3">
    <location>
        <begin position="99"/>
        <end position="110"/>
    </location>
</feature>
<feature type="lipid moiety-binding region" description="GPI-anchor amidated glycine" evidence="2">
    <location>
        <position position="115"/>
    </location>
</feature>
<feature type="glycosylation site" description="N-linked (GlcNAc...) asparagine" evidence="2">
    <location>
        <position position="21"/>
    </location>
</feature>
<feature type="glycosylation site" description="N-linked (GlcNAc...) asparagine" evidence="2">
    <location>
        <position position="82"/>
    </location>
</feature>
<dbReference type="EMBL" id="Z48179">
    <property type="protein sequence ID" value="CAA88216.1"/>
    <property type="status" value="ALT_SEQ"/>
    <property type="molecule type" value="Genomic_DNA"/>
</dbReference>
<dbReference type="GlyCosmos" id="Q7LHD1">
    <property type="glycosylation" value="2 sites, No reported glycans"/>
</dbReference>
<dbReference type="AGR" id="SGD:S000002541"/>
<dbReference type="SGD" id="S000002541">
    <property type="gene designation" value="CCW22"/>
</dbReference>
<dbReference type="ChiTaRS" id="YDR134C">
    <property type="organism name" value="yeast"/>
</dbReference>
<dbReference type="GO" id="GO:0005576">
    <property type="term" value="C:extracellular region"/>
    <property type="evidence" value="ECO:0007669"/>
    <property type="project" value="UniProtKB-KW"/>
</dbReference>
<dbReference type="GO" id="GO:0009277">
    <property type="term" value="C:fungal-type cell wall"/>
    <property type="evidence" value="ECO:0000314"/>
    <property type="project" value="SGD"/>
</dbReference>
<dbReference type="GO" id="GO:0098552">
    <property type="term" value="C:side of membrane"/>
    <property type="evidence" value="ECO:0007669"/>
    <property type="project" value="UniProtKB-KW"/>
</dbReference>
<dbReference type="InterPro" id="IPR025928">
    <property type="entry name" value="Flocculin_t3_rpt"/>
</dbReference>
<dbReference type="Pfam" id="PF13928">
    <property type="entry name" value="Flocculin_t3"/>
    <property type="match status" value="1"/>
</dbReference>
<protein>
    <recommendedName>
        <fullName>Putative covalently bound cell wall protein 22</fullName>
    </recommendedName>
</protein>
<comment type="function">
    <text evidence="1">Cell wall protein necessary for cell wall integrity.</text>
</comment>
<comment type="subcellular location">
    <subcellularLocation>
        <location evidence="6">Secreted</location>
        <location evidence="6">Cell wall</location>
    </subcellularLocation>
    <subcellularLocation>
        <location evidence="4">Membrane</location>
        <topology evidence="4">Lipid-anchor</topology>
        <topology evidence="4">GPI-anchor</topology>
    </subcellularLocation>
</comment>
<comment type="PTM">
    <text evidence="1">The GPI-anchor is attached to the protein in the endoplasmic reticulum and serves to target the protein to the cell surface. There, the glucosamine-inositol phospholipid moiety is cleaved off and the GPI-modified mannoprotein is covalently attached via its lipidless GPI glycan remnant to the 1,6-beta-glucan of the outer cell wall layer (By similarity).</text>
</comment>
<comment type="similarity">
    <text evidence="4">Belongs to the PGA59 family.</text>
</comment>
<comment type="caution">
    <text evidence="5">Could be the product of a pseudogene unlikely to encode a functional protein. Strain S288c has a stop codon in position 67, which disrupts the gene coding for this protein and produces two ORFs. Because of that it is not part of the S.cerevisiae S288c complete/reference proteome set.</text>
</comment>
<comment type="sequence caution" evidence="4">
    <conflict type="erroneous termination">
        <sequence resource="EMBL-CDS" id="CAA88216"/>
    </conflict>
    <text>Truncated C-terminus.</text>
</comment>
<gene>
    <name type="primary">CCW22</name>
    <name type="ordered locus">YDR134C</name>
    <name type="ORF">YD9302.09C/YD9302.10C</name>
</gene>
<evidence type="ECO:0000250" key="1"/>
<evidence type="ECO:0000255" key="2"/>
<evidence type="ECO:0000256" key="3">
    <source>
        <dbReference type="SAM" id="MobiDB-lite"/>
    </source>
</evidence>
<evidence type="ECO:0000305" key="4"/>
<evidence type="ECO:0000305" key="5">
    <source>
    </source>
</evidence>
<evidence type="ECO:0000305" key="6">
    <source>
    </source>
</evidence>
<name>CCW22_YEAST</name>